<proteinExistence type="inferred from homology"/>
<organismHost>
    <name type="scientific">Homo sapiens</name>
    <name type="common">Human</name>
    <dbReference type="NCBI Taxonomy" id="9606"/>
</organismHost>
<accession>P0DON6</accession>
<accession>P33875</accession>
<organism>
    <name type="scientific">Variola virus</name>
    <dbReference type="NCBI Taxonomy" id="10255"/>
    <lineage>
        <taxon>Viruses</taxon>
        <taxon>Varidnaviria</taxon>
        <taxon>Bamfordvirae</taxon>
        <taxon>Nucleocytoviricota</taxon>
        <taxon>Pokkesviricetes</taxon>
        <taxon>Chitovirales</taxon>
        <taxon>Poxviridae</taxon>
        <taxon>Chordopoxvirinae</taxon>
        <taxon>Orthopoxvirus</taxon>
    </lineage>
</organism>
<reference key="1">
    <citation type="journal article" date="1993" name="Nature">
        <title>Potential virulence determinants in terminal regions of variola smallpox virus genome.</title>
        <authorList>
            <person name="Massung R.F."/>
            <person name="Esposito J.J."/>
            <person name="Liu L.I."/>
            <person name="Qi J."/>
            <person name="Utterback T.R."/>
            <person name="Knight J.C."/>
            <person name="Aubin L."/>
            <person name="Yuran T.E."/>
            <person name="Parsons J.M."/>
            <person name="Loparev V.N."/>
            <person name="Selivanov N.A."/>
            <person name="Cavallaro K.F."/>
            <person name="Kerlavage A.R."/>
            <person name="Mahy B.W.J."/>
            <person name="Venter J.C."/>
        </authorList>
    </citation>
    <scope>NUCLEOTIDE SEQUENCE [GENOMIC DNA]</scope>
    <source>
        <strain>Bangladesh-1975</strain>
    </source>
</reference>
<dbReference type="EMBL" id="L22579">
    <property type="protein sequence ID" value="AAA60789.1"/>
    <property type="molecule type" value="Genomic_DNA"/>
</dbReference>
<dbReference type="PIR" id="T28479">
    <property type="entry name" value="T28479"/>
</dbReference>
<dbReference type="RefSeq" id="NP_042085.1">
    <property type="nucleotide sequence ID" value="NC_001611.1"/>
</dbReference>
<dbReference type="GeneID" id="1486578"/>
<dbReference type="KEGG" id="vg:1486578"/>
<dbReference type="Proteomes" id="UP000119805">
    <property type="component" value="Segment"/>
</dbReference>
<dbReference type="GO" id="GO:0044423">
    <property type="term" value="C:virion component"/>
    <property type="evidence" value="ECO:0007669"/>
    <property type="project" value="UniProtKB-KW"/>
</dbReference>
<dbReference type="GO" id="GO:0003677">
    <property type="term" value="F:DNA binding"/>
    <property type="evidence" value="ECO:0007669"/>
    <property type="project" value="UniProtKB-KW"/>
</dbReference>
<dbReference type="GO" id="GO:0052170">
    <property type="term" value="P:symbiont-mediated suppression of host innate immune response"/>
    <property type="evidence" value="ECO:0007669"/>
    <property type="project" value="UniProtKB-KW"/>
</dbReference>
<dbReference type="GO" id="GO:0019082">
    <property type="term" value="P:viral protein processing"/>
    <property type="evidence" value="ECO:0007669"/>
    <property type="project" value="InterPro"/>
</dbReference>
<dbReference type="InterPro" id="IPR006854">
    <property type="entry name" value="Phosphoprotein_F17"/>
</dbReference>
<dbReference type="Pfam" id="PF04767">
    <property type="entry name" value="Pox_F17"/>
    <property type="match status" value="1"/>
</dbReference>
<dbReference type="PIRSF" id="PIRSF003688">
    <property type="entry name" value="VAC_PP"/>
    <property type="match status" value="1"/>
</dbReference>
<sequence length="101" mass="11337">MNSHFASAHTPFYINTKEGRYLVLKAVKVCDVRTVEFEGSKASCVLKVDKPSSPASERRPSSPSRCERMNNPGKQVPFMRTDMLQNMFAANRDNVASRLLS</sequence>
<feature type="chain" id="PRO_0000448190" description="Phosphoprotein OPG062">
    <location>
        <begin position="1"/>
        <end position="101"/>
    </location>
</feature>
<feature type="region of interest" description="Disordered" evidence="2">
    <location>
        <begin position="48"/>
        <end position="76"/>
    </location>
</feature>
<feature type="compositionally biased region" description="Basic and acidic residues" evidence="2">
    <location>
        <begin position="56"/>
        <end position="68"/>
    </location>
</feature>
<feature type="modified residue" description="Phosphoserine" evidence="1">
    <location>
        <position position="53"/>
    </location>
</feature>
<feature type="modified residue" description="Phosphoserine" evidence="1">
    <location>
        <position position="62"/>
    </location>
</feature>
<name>PG062_VARV</name>
<keyword id="KW-0238">DNA-binding</keyword>
<keyword id="KW-0945">Host-virus interaction</keyword>
<keyword id="KW-1090">Inhibition of host innate immune response by virus</keyword>
<keyword id="KW-0426">Late protein</keyword>
<keyword id="KW-0597">Phosphoprotein</keyword>
<keyword id="KW-0899">Viral immunoevasion</keyword>
<keyword id="KW-0946">Virion</keyword>
<gene>
    <name type="primary">OPG062</name>
    <name type="ORF">C21R</name>
    <name type="ORF">F17R</name>
</gene>
<evidence type="ECO:0000250" key="1">
    <source>
        <dbReference type="UniProtKB" id="P07396"/>
    </source>
</evidence>
<evidence type="ECO:0000256" key="2">
    <source>
        <dbReference type="SAM" id="MobiDB-lite"/>
    </source>
</evidence>
<evidence type="ECO:0000305" key="3"/>
<comment type="function">
    <text evidence="1">Plays an essential role in virion assembly and morphogenesis. Also plays a role in the inhibition of host immune response by dysregulating mTOR. Sequesters host RICTOR and RPTOR, thereby disrupting mTORC1 and mTORC2 crosstalk. In turn, blocks the host antiviral response in part through mTOR-dependent degradation of cGAS, the primary poxvirus sensor.</text>
</comment>
<comment type="subunit">
    <text evidence="1">Self-associates to form high molecular-weight forms. Interacts with protein OPG157. Interacts with host RICTOR and RPTOR; these interactions disrupt the mTORC1 and mTORC2 crosstalk.</text>
</comment>
<comment type="subcellular location">
    <subcellularLocation>
        <location evidence="1">Virion</location>
    </subcellularLocation>
    <text evidence="1">Major component of the virion comprising about 10% of the virion mass.</text>
</comment>
<comment type="PTM">
    <text evidence="1">Phosphorylated on two serines. While these phosphorylations do not play a role in virion assembly; they are essential for the interaction with host RICTOR and RPTOR.</text>
</comment>
<comment type="similarity">
    <text evidence="3">Belongs to the orthopoxvirus OPG062 family.</text>
</comment>
<protein>
    <recommendedName>
        <fullName>Phosphoprotein OPG062</fullName>
    </recommendedName>
    <alternativeName>
        <fullName>Phosphoprotein F17</fullName>
    </alternativeName>
</protein>